<evidence type="ECO:0000255" key="1">
    <source>
        <dbReference type="HAMAP-Rule" id="MF_00303"/>
    </source>
</evidence>
<proteinExistence type="inferred from homology"/>
<comment type="function">
    <text evidence="1">Involved in protein export. Acts as a chaperone by maintaining the newly synthesized protein in an open conformation. Functions as a peptidyl-prolyl cis-trans isomerase.</text>
</comment>
<comment type="catalytic activity">
    <reaction evidence="1">
        <text>[protein]-peptidylproline (omega=180) = [protein]-peptidylproline (omega=0)</text>
        <dbReference type="Rhea" id="RHEA:16237"/>
        <dbReference type="Rhea" id="RHEA-COMP:10747"/>
        <dbReference type="Rhea" id="RHEA-COMP:10748"/>
        <dbReference type="ChEBI" id="CHEBI:83833"/>
        <dbReference type="ChEBI" id="CHEBI:83834"/>
        <dbReference type="EC" id="5.2.1.8"/>
    </reaction>
</comment>
<comment type="subcellular location">
    <subcellularLocation>
        <location>Cytoplasm</location>
    </subcellularLocation>
    <text evidence="1">About half TF is bound to the ribosome near the polypeptide exit tunnel while the other half is free in the cytoplasm.</text>
</comment>
<comment type="domain">
    <text evidence="1">Consists of 3 domains; the N-terminus binds the ribosome, the middle domain has PPIase activity, while the C-terminus has intrinsic chaperone activity on its own.</text>
</comment>
<comment type="similarity">
    <text evidence="1">Belongs to the FKBP-type PPIase family. Tig subfamily.</text>
</comment>
<organism>
    <name type="scientific">Salmonella agona (strain SL483)</name>
    <dbReference type="NCBI Taxonomy" id="454166"/>
    <lineage>
        <taxon>Bacteria</taxon>
        <taxon>Pseudomonadati</taxon>
        <taxon>Pseudomonadota</taxon>
        <taxon>Gammaproteobacteria</taxon>
        <taxon>Enterobacterales</taxon>
        <taxon>Enterobacteriaceae</taxon>
        <taxon>Salmonella</taxon>
    </lineage>
</organism>
<accession>B5EXI7</accession>
<name>TIG_SALA4</name>
<protein>
    <recommendedName>
        <fullName evidence="1">Trigger factor</fullName>
        <shortName evidence="1">TF</shortName>
        <ecNumber evidence="1">5.2.1.8</ecNumber>
    </recommendedName>
    <alternativeName>
        <fullName evidence="1">PPIase</fullName>
    </alternativeName>
</protein>
<feature type="chain" id="PRO_1000115573" description="Trigger factor">
    <location>
        <begin position="1"/>
        <end position="432"/>
    </location>
</feature>
<feature type="domain" description="PPIase FKBP-type" evidence="1">
    <location>
        <begin position="161"/>
        <end position="246"/>
    </location>
</feature>
<keyword id="KW-0131">Cell cycle</keyword>
<keyword id="KW-0132">Cell division</keyword>
<keyword id="KW-0143">Chaperone</keyword>
<keyword id="KW-0963">Cytoplasm</keyword>
<keyword id="KW-0413">Isomerase</keyword>
<keyword id="KW-0697">Rotamase</keyword>
<dbReference type="EC" id="5.2.1.8" evidence="1"/>
<dbReference type="EMBL" id="CP001138">
    <property type="protein sequence ID" value="ACH50314.1"/>
    <property type="molecule type" value="Genomic_DNA"/>
</dbReference>
<dbReference type="RefSeq" id="WP_001198403.1">
    <property type="nucleotide sequence ID" value="NC_011149.1"/>
</dbReference>
<dbReference type="SMR" id="B5EXI7"/>
<dbReference type="KEGG" id="sea:SeAg_B0487"/>
<dbReference type="HOGENOM" id="CLU_033058_2_0_6"/>
<dbReference type="Proteomes" id="UP000008819">
    <property type="component" value="Chromosome"/>
</dbReference>
<dbReference type="GO" id="GO:0005737">
    <property type="term" value="C:cytoplasm"/>
    <property type="evidence" value="ECO:0007669"/>
    <property type="project" value="UniProtKB-SubCell"/>
</dbReference>
<dbReference type="GO" id="GO:0003755">
    <property type="term" value="F:peptidyl-prolyl cis-trans isomerase activity"/>
    <property type="evidence" value="ECO:0007669"/>
    <property type="project" value="UniProtKB-UniRule"/>
</dbReference>
<dbReference type="GO" id="GO:0044183">
    <property type="term" value="F:protein folding chaperone"/>
    <property type="evidence" value="ECO:0007669"/>
    <property type="project" value="TreeGrafter"/>
</dbReference>
<dbReference type="GO" id="GO:0043022">
    <property type="term" value="F:ribosome binding"/>
    <property type="evidence" value="ECO:0007669"/>
    <property type="project" value="TreeGrafter"/>
</dbReference>
<dbReference type="GO" id="GO:0051083">
    <property type="term" value="P:'de novo' cotranslational protein folding"/>
    <property type="evidence" value="ECO:0007669"/>
    <property type="project" value="TreeGrafter"/>
</dbReference>
<dbReference type="GO" id="GO:0051301">
    <property type="term" value="P:cell division"/>
    <property type="evidence" value="ECO:0007669"/>
    <property type="project" value="UniProtKB-KW"/>
</dbReference>
<dbReference type="GO" id="GO:0061077">
    <property type="term" value="P:chaperone-mediated protein folding"/>
    <property type="evidence" value="ECO:0007669"/>
    <property type="project" value="TreeGrafter"/>
</dbReference>
<dbReference type="GO" id="GO:0015031">
    <property type="term" value="P:protein transport"/>
    <property type="evidence" value="ECO:0007669"/>
    <property type="project" value="UniProtKB-UniRule"/>
</dbReference>
<dbReference type="GO" id="GO:0043335">
    <property type="term" value="P:protein unfolding"/>
    <property type="evidence" value="ECO:0007669"/>
    <property type="project" value="TreeGrafter"/>
</dbReference>
<dbReference type="FunFam" id="1.10.3120.10:FF:000001">
    <property type="entry name" value="Trigger factor"/>
    <property type="match status" value="1"/>
</dbReference>
<dbReference type="FunFam" id="3.10.50.40:FF:000001">
    <property type="entry name" value="Trigger factor"/>
    <property type="match status" value="1"/>
</dbReference>
<dbReference type="FunFam" id="3.30.70.1050:FF:000001">
    <property type="entry name" value="Trigger factor"/>
    <property type="match status" value="1"/>
</dbReference>
<dbReference type="Gene3D" id="3.10.50.40">
    <property type="match status" value="1"/>
</dbReference>
<dbReference type="Gene3D" id="3.30.70.1050">
    <property type="entry name" value="Trigger factor ribosome-binding domain"/>
    <property type="match status" value="1"/>
</dbReference>
<dbReference type="Gene3D" id="1.10.3120.10">
    <property type="entry name" value="Trigger factor, C-terminal domain"/>
    <property type="match status" value="1"/>
</dbReference>
<dbReference type="HAMAP" id="MF_00303">
    <property type="entry name" value="Trigger_factor_Tig"/>
    <property type="match status" value="1"/>
</dbReference>
<dbReference type="InterPro" id="IPR046357">
    <property type="entry name" value="PPIase_dom_sf"/>
</dbReference>
<dbReference type="InterPro" id="IPR001179">
    <property type="entry name" value="PPIase_FKBP_dom"/>
</dbReference>
<dbReference type="InterPro" id="IPR005215">
    <property type="entry name" value="Trig_fac"/>
</dbReference>
<dbReference type="InterPro" id="IPR008880">
    <property type="entry name" value="Trigger_fac_C"/>
</dbReference>
<dbReference type="InterPro" id="IPR037041">
    <property type="entry name" value="Trigger_fac_C_sf"/>
</dbReference>
<dbReference type="InterPro" id="IPR008881">
    <property type="entry name" value="Trigger_fac_ribosome-bd_bac"/>
</dbReference>
<dbReference type="InterPro" id="IPR036611">
    <property type="entry name" value="Trigger_fac_ribosome-bd_sf"/>
</dbReference>
<dbReference type="InterPro" id="IPR027304">
    <property type="entry name" value="Trigger_fact/SurA_dom_sf"/>
</dbReference>
<dbReference type="NCBIfam" id="TIGR00115">
    <property type="entry name" value="tig"/>
    <property type="match status" value="1"/>
</dbReference>
<dbReference type="PANTHER" id="PTHR30560">
    <property type="entry name" value="TRIGGER FACTOR CHAPERONE AND PEPTIDYL-PROLYL CIS/TRANS ISOMERASE"/>
    <property type="match status" value="1"/>
</dbReference>
<dbReference type="PANTHER" id="PTHR30560:SF3">
    <property type="entry name" value="TRIGGER FACTOR-LIKE PROTEIN TIG, CHLOROPLASTIC"/>
    <property type="match status" value="1"/>
</dbReference>
<dbReference type="Pfam" id="PF00254">
    <property type="entry name" value="FKBP_C"/>
    <property type="match status" value="1"/>
</dbReference>
<dbReference type="Pfam" id="PF05698">
    <property type="entry name" value="Trigger_C"/>
    <property type="match status" value="1"/>
</dbReference>
<dbReference type="Pfam" id="PF05697">
    <property type="entry name" value="Trigger_N"/>
    <property type="match status" value="1"/>
</dbReference>
<dbReference type="PIRSF" id="PIRSF003095">
    <property type="entry name" value="Trigger_factor"/>
    <property type="match status" value="1"/>
</dbReference>
<dbReference type="SUPFAM" id="SSF54534">
    <property type="entry name" value="FKBP-like"/>
    <property type="match status" value="1"/>
</dbReference>
<dbReference type="SUPFAM" id="SSF109998">
    <property type="entry name" value="Triger factor/SurA peptide-binding domain-like"/>
    <property type="match status" value="1"/>
</dbReference>
<dbReference type="SUPFAM" id="SSF102735">
    <property type="entry name" value="Trigger factor ribosome-binding domain"/>
    <property type="match status" value="1"/>
</dbReference>
<dbReference type="PROSITE" id="PS50059">
    <property type="entry name" value="FKBP_PPIASE"/>
    <property type="match status" value="1"/>
</dbReference>
<gene>
    <name evidence="1" type="primary">tig</name>
    <name type="ordered locus">SeAg_B0487</name>
</gene>
<sequence length="432" mass="48050">MQVSVETTQGLGRRVTITIAADSIETAVKSELVNVAKKVRIDGFRKGKVPMNIVAQRYGASVRQDVLGDLMSRNFVDAIIKEKINPAGAPNYVPGEYKVGEDFTYSVEFEVYPEVELTGLESIEVEKPVVEVTDADVDVMLDTLRKQQATWKEKDGAADAEDRVTIDFTGSVDGEEFEGGKATDFVLAMGQGRMIPGFEDGVKGHKAGEEFTIDVTFPEEYHAENLKGKAAKFVINLKKVEERELPELTEEFIKRFGVEDGSVAGLRAEVRKNMERELKGAVRNRVKSQAIEGLVKANDIDVPAALIDSEIDVLRRQAAQRFGGNEKQALELPRELFEEQAKRRVVVGLLLGEVIRTNELKADEERVKGLIEEMASAYEDPKEVIEFYSKNKELMDNMRNVALEEQAVEAVLAKAKVSEKATSFNELMNQQA</sequence>
<reference key="1">
    <citation type="journal article" date="2011" name="J. Bacteriol.">
        <title>Comparative genomics of 28 Salmonella enterica isolates: evidence for CRISPR-mediated adaptive sublineage evolution.</title>
        <authorList>
            <person name="Fricke W.F."/>
            <person name="Mammel M.K."/>
            <person name="McDermott P.F."/>
            <person name="Tartera C."/>
            <person name="White D.G."/>
            <person name="Leclerc J.E."/>
            <person name="Ravel J."/>
            <person name="Cebula T.A."/>
        </authorList>
    </citation>
    <scope>NUCLEOTIDE SEQUENCE [LARGE SCALE GENOMIC DNA]</scope>
    <source>
        <strain>SL483</strain>
    </source>
</reference>